<organism>
    <name type="scientific">Nicotiana tabacum</name>
    <name type="common">Common tobacco</name>
    <dbReference type="NCBI Taxonomy" id="4097"/>
    <lineage>
        <taxon>Eukaryota</taxon>
        <taxon>Viridiplantae</taxon>
        <taxon>Streptophyta</taxon>
        <taxon>Embryophyta</taxon>
        <taxon>Tracheophyta</taxon>
        <taxon>Spermatophyta</taxon>
        <taxon>Magnoliopsida</taxon>
        <taxon>eudicotyledons</taxon>
        <taxon>Gunneridae</taxon>
        <taxon>Pentapetalae</taxon>
        <taxon>asterids</taxon>
        <taxon>lamiids</taxon>
        <taxon>Solanales</taxon>
        <taxon>Solanaceae</taxon>
        <taxon>Nicotianoideae</taxon>
        <taxon>Nicotianeae</taxon>
        <taxon>Nicotiana</taxon>
    </lineage>
</organism>
<reference key="1">
    <citation type="journal article" date="1990" name="Nucleic Acids Res.">
        <title>The nucleotide sequence of an anther-specific gene.</title>
        <authorList>
            <person name="Seurinck J."/>
            <person name="Truettner J."/>
            <person name="Goldberg R.B."/>
        </authorList>
    </citation>
    <scope>NUCLEOTIDE SEQUENCE [GENOMIC DNA]</scope>
</reference>
<accession>P24805</accession>
<dbReference type="EMBL" id="X52283">
    <property type="protein sequence ID" value="CAA36525.1"/>
    <property type="molecule type" value="Genomic_DNA"/>
</dbReference>
<dbReference type="PIR" id="S13551">
    <property type="entry name" value="S13551"/>
</dbReference>
<dbReference type="SMR" id="P24805"/>
<dbReference type="STRING" id="4097.P24805"/>
<dbReference type="PaxDb" id="4097-P24805"/>
<dbReference type="Proteomes" id="UP000084051">
    <property type="component" value="Unplaced"/>
</dbReference>
<dbReference type="Gene3D" id="3.60.20.10">
    <property type="entry name" value="Glutamine Phosphoribosylpyrophosphate, subunit 1, domain 1"/>
    <property type="match status" value="1"/>
</dbReference>
<dbReference type="InterPro" id="IPR024286">
    <property type="entry name" value="DUF3700"/>
</dbReference>
<dbReference type="InterPro" id="IPR029055">
    <property type="entry name" value="Ntn_hydrolases_N"/>
</dbReference>
<dbReference type="InterPro" id="IPR044828">
    <property type="entry name" value="TSJT1-like"/>
</dbReference>
<dbReference type="PANTHER" id="PTHR45952">
    <property type="entry name" value="ALUMINUM INDUCED PROTEIN WITH YGL AND LRDR MOTIFS"/>
    <property type="match status" value="1"/>
</dbReference>
<dbReference type="PANTHER" id="PTHR45952:SF8">
    <property type="entry name" value="STEM-SPECIFIC PROTEIN TSJT1"/>
    <property type="match status" value="1"/>
</dbReference>
<dbReference type="Pfam" id="PF12481">
    <property type="entry name" value="DUF3700"/>
    <property type="match status" value="1"/>
</dbReference>
<dbReference type="SMART" id="SM01172">
    <property type="entry name" value="DUF3700"/>
    <property type="match status" value="1"/>
</dbReference>
<dbReference type="SUPFAM" id="SSF56235">
    <property type="entry name" value="N-terminal nucleophile aminohydrolases (Ntn hydrolases)"/>
    <property type="match status" value="1"/>
</dbReference>
<proteinExistence type="evidence at transcript level"/>
<protein>
    <recommendedName>
        <fullName>Stem-specific protein TSJT1</fullName>
    </recommendedName>
</protein>
<name>TSJT1_TOBAC</name>
<sequence length="149" mass="17026">MLAVFEQSIGRPPPELSLPQAGIQKKEAKTREEIAESFKTWKQDSTFYHLFNGNFMAFSHGNENPLQPRSIVVMDDVFCIFSGALDNTFDLRKHYGLSRQATEAMIMVEAYKVLRDRAPYPPDQVIKELEGKFAFILFDSKASTLFLAR</sequence>
<gene>
    <name type="primary">TSJT1</name>
</gene>
<feature type="chain" id="PRO_0000065664" description="Stem-specific protein TSJT1">
    <location>
        <begin position="1"/>
        <end position="149"/>
    </location>
</feature>
<keyword id="KW-1185">Reference proteome</keyword>
<comment type="tissue specificity">
    <text>Stem-specific (active at lower levels in other organs).</text>
</comment>